<gene>
    <name evidence="1" type="primary">psbY</name>
    <name type="ordered locus">Ava_3682</name>
</gene>
<proteinExistence type="inferred from homology"/>
<evidence type="ECO:0000255" key="1">
    <source>
        <dbReference type="HAMAP-Rule" id="MF_00717"/>
    </source>
</evidence>
<reference key="1">
    <citation type="journal article" date="2014" name="Stand. Genomic Sci.">
        <title>Complete genome sequence of Anabaena variabilis ATCC 29413.</title>
        <authorList>
            <person name="Thiel T."/>
            <person name="Pratte B.S."/>
            <person name="Zhong J."/>
            <person name="Goodwin L."/>
            <person name="Copeland A."/>
            <person name="Lucas S."/>
            <person name="Han C."/>
            <person name="Pitluck S."/>
            <person name="Land M.L."/>
            <person name="Kyrpides N.C."/>
            <person name="Woyke T."/>
        </authorList>
    </citation>
    <scope>NUCLEOTIDE SEQUENCE [LARGE SCALE GENOMIC DNA]</scope>
    <source>
        <strain>ATCC 29413 / PCC 7937</strain>
    </source>
</reference>
<keyword id="KW-0472">Membrane</keyword>
<keyword id="KW-0602">Photosynthesis</keyword>
<keyword id="KW-0604">Photosystem II</keyword>
<keyword id="KW-0793">Thylakoid</keyword>
<keyword id="KW-0812">Transmembrane</keyword>
<keyword id="KW-1133">Transmembrane helix</keyword>
<comment type="function">
    <text evidence="1">Loosely associated component of the core of photosystem II (PSII), it is not always seen in crystals. PSII is a light-driven water plastoquinone oxidoreductase, using light energy to abstract electrons from H(2)O, generating a proton gradient subsequently used for ATP formation.</text>
</comment>
<comment type="subunit">
    <text evidence="1">PSII is composed of 1 copy each of membrane proteins PsbA, PsbB, PsbC, PsbD, PsbE, PsbF, PsbH, PsbI, PsbJ, PsbK, PsbL, PsbM, PsbT, PsbX, PsbY, PsbZ, Psb30/Ycf12, peripheral proteins PsbO, CyanoQ (PsbQ), PsbU, PsbV and a large number of cofactors. It forms dimeric complexes.</text>
</comment>
<comment type="subcellular location">
    <subcellularLocation>
        <location evidence="1">Cellular thylakoid membrane</location>
        <topology evidence="1">Single-pass membrane protein</topology>
    </subcellularLocation>
</comment>
<comment type="similarity">
    <text evidence="1">Belongs to the PsbY family.</text>
</comment>
<organism>
    <name type="scientific">Trichormus variabilis (strain ATCC 29413 / PCC 7937)</name>
    <name type="common">Anabaena variabilis</name>
    <dbReference type="NCBI Taxonomy" id="240292"/>
    <lineage>
        <taxon>Bacteria</taxon>
        <taxon>Bacillati</taxon>
        <taxon>Cyanobacteriota</taxon>
        <taxon>Cyanophyceae</taxon>
        <taxon>Nostocales</taxon>
        <taxon>Nostocaceae</taxon>
        <taxon>Trichormus</taxon>
    </lineage>
</organism>
<name>PSBY_TRIV2</name>
<accession>Q3M6U8</accession>
<protein>
    <recommendedName>
        <fullName evidence="1">Photosystem II reaction center protein Y</fullName>
    </recommendedName>
</protein>
<sequence length="41" mass="4385">MDIDFRVAIVLAPIAVAAGWAAFNIGAAAIRQVQNFLNREA</sequence>
<feature type="chain" id="PRO_1000045751" description="Photosystem II reaction center protein Y">
    <location>
        <begin position="1"/>
        <end position="41"/>
    </location>
</feature>
<feature type="transmembrane region" description="Helical" evidence="1">
    <location>
        <begin position="7"/>
        <end position="25"/>
    </location>
</feature>
<dbReference type="EMBL" id="CP000117">
    <property type="protein sequence ID" value="ABA23288.1"/>
    <property type="molecule type" value="Genomic_DNA"/>
</dbReference>
<dbReference type="RefSeq" id="WP_010995199.1">
    <property type="nucleotide sequence ID" value="NC_007413.1"/>
</dbReference>
<dbReference type="SMR" id="Q3M6U8"/>
<dbReference type="STRING" id="240292.Ava_3682"/>
<dbReference type="KEGG" id="ava:Ava_3682"/>
<dbReference type="eggNOG" id="ENOG5033BVG">
    <property type="taxonomic scope" value="Bacteria"/>
</dbReference>
<dbReference type="HOGENOM" id="CLU_218393_1_0_3"/>
<dbReference type="Proteomes" id="UP000002533">
    <property type="component" value="Chromosome"/>
</dbReference>
<dbReference type="GO" id="GO:0009523">
    <property type="term" value="C:photosystem II"/>
    <property type="evidence" value="ECO:0007669"/>
    <property type="project" value="UniProtKB-KW"/>
</dbReference>
<dbReference type="GO" id="GO:0031676">
    <property type="term" value="C:plasma membrane-derived thylakoid membrane"/>
    <property type="evidence" value="ECO:0007669"/>
    <property type="project" value="UniProtKB-SubCell"/>
</dbReference>
<dbReference type="GO" id="GO:0030145">
    <property type="term" value="F:manganese ion binding"/>
    <property type="evidence" value="ECO:0007669"/>
    <property type="project" value="InterPro"/>
</dbReference>
<dbReference type="GO" id="GO:0015979">
    <property type="term" value="P:photosynthesis"/>
    <property type="evidence" value="ECO:0007669"/>
    <property type="project" value="UniProtKB-UniRule"/>
</dbReference>
<dbReference type="HAMAP" id="MF_00717">
    <property type="entry name" value="PSII_PsbY"/>
    <property type="match status" value="1"/>
</dbReference>
<dbReference type="InterPro" id="IPR009388">
    <property type="entry name" value="PSII_PsbY"/>
</dbReference>
<dbReference type="NCBIfam" id="NF009711">
    <property type="entry name" value="PRK13240.1"/>
    <property type="match status" value="1"/>
</dbReference>
<dbReference type="Pfam" id="PF06298">
    <property type="entry name" value="PsbY"/>
    <property type="match status" value="1"/>
</dbReference>